<evidence type="ECO:0000250" key="1"/>
<evidence type="ECO:0000255" key="2">
    <source>
        <dbReference type="PROSITE-ProRule" id="PRU00238"/>
    </source>
</evidence>
<evidence type="ECO:0000255" key="3">
    <source>
        <dbReference type="PROSITE-ProRule" id="PRU00716"/>
    </source>
</evidence>
<evidence type="ECO:0000269" key="4">
    <source>
    </source>
</evidence>
<evidence type="ECO:0000269" key="5">
    <source>
    </source>
</evidence>
<evidence type="ECO:0000305" key="6"/>
<gene>
    <name type="primary">hmpA</name>
    <name type="synonym">FLHb</name>
    <name type="ORF">GL50803_15009</name>
</gene>
<proteinExistence type="evidence at protein level"/>
<feature type="chain" id="PRO_0000409354" description="Flavohemoprotein">
    <location>
        <begin position="1"/>
        <end position="458"/>
    </location>
</feature>
<feature type="domain" description="Globin" evidence="2">
    <location>
        <begin position="2"/>
        <end position="158"/>
    </location>
</feature>
<feature type="domain" description="FAD-binding FR-type" evidence="3">
    <location>
        <begin position="172"/>
        <end position="279"/>
    </location>
</feature>
<feature type="region of interest" description="Reductase" evidence="1">
    <location>
        <begin position="169"/>
        <end position="457"/>
    </location>
</feature>
<feature type="active site" description="Charge relay system" evidence="1">
    <location>
        <position position="117"/>
    </location>
</feature>
<feature type="active site" description="Charge relay system" evidence="1">
    <location>
        <position position="157"/>
    </location>
</feature>
<feature type="binding site" description="proximal binding residue" evidence="2">
    <location>
        <position position="107"/>
    </location>
    <ligand>
        <name>heme b</name>
        <dbReference type="ChEBI" id="CHEBI:60344"/>
    </ligand>
    <ligandPart>
        <name>Fe</name>
        <dbReference type="ChEBI" id="CHEBI:18248"/>
    </ligandPart>
</feature>
<feature type="binding site" evidence="1">
    <location>
        <position position="211"/>
    </location>
    <ligand>
        <name>FAD</name>
        <dbReference type="ChEBI" id="CHEBI:57692"/>
    </ligand>
</feature>
<feature type="binding site" evidence="1">
    <location>
        <begin position="228"/>
        <end position="231"/>
    </location>
    <ligand>
        <name>FAD</name>
        <dbReference type="ChEBI" id="CHEBI:57692"/>
    </ligand>
</feature>
<feature type="binding site" evidence="1">
    <location>
        <begin position="321"/>
        <end position="326"/>
    </location>
    <ligand>
        <name>NADP(+)</name>
        <dbReference type="ChEBI" id="CHEBI:58349"/>
    </ligand>
</feature>
<feature type="binding site" evidence="1">
    <location>
        <begin position="450"/>
        <end position="453"/>
    </location>
    <ligand>
        <name>FAD</name>
        <dbReference type="ChEBI" id="CHEBI:57692"/>
    </ligand>
</feature>
<feature type="site" description="Involved in heme-bound ligand stabilization and O-O bond activation" evidence="1">
    <location>
        <position position="30"/>
    </location>
</feature>
<feature type="site" description="Influences the redox potential of the prosthetic heme and FAD groups" evidence="1">
    <location>
        <position position="106"/>
    </location>
</feature>
<feature type="site" description="Influences the redox potential of the prosthetic heme and FAD groups" evidence="1">
    <location>
        <position position="449"/>
    </location>
</feature>
<comment type="function">
    <text evidence="4 5">Flavohemoprotein involved in nitric oxide (NO) detoxification in an aerobic process, termed nitric oxide dioxygenase (NOD) reaction that utilizes O(2) and NAD(P)H to convert NO to nitrate, which protects the protozoan parasite from various noxious nitrogen compounds. Therefore, plays a central role in the inducible response to nitrosative stress. May also be involved in O(2) detoxification.</text>
</comment>
<comment type="catalytic activity">
    <reaction>
        <text>2 nitric oxide + NADPH + 2 O2 = 2 nitrate + NADP(+) + H(+)</text>
        <dbReference type="Rhea" id="RHEA:19465"/>
        <dbReference type="ChEBI" id="CHEBI:15378"/>
        <dbReference type="ChEBI" id="CHEBI:15379"/>
        <dbReference type="ChEBI" id="CHEBI:16480"/>
        <dbReference type="ChEBI" id="CHEBI:17632"/>
        <dbReference type="ChEBI" id="CHEBI:57783"/>
        <dbReference type="ChEBI" id="CHEBI:58349"/>
        <dbReference type="EC" id="1.14.12.17"/>
    </reaction>
</comment>
<comment type="catalytic activity">
    <reaction>
        <text>2 nitric oxide + NADH + 2 O2 = 2 nitrate + NAD(+) + H(+)</text>
        <dbReference type="Rhea" id="RHEA:19469"/>
        <dbReference type="ChEBI" id="CHEBI:15378"/>
        <dbReference type="ChEBI" id="CHEBI:15379"/>
        <dbReference type="ChEBI" id="CHEBI:16480"/>
        <dbReference type="ChEBI" id="CHEBI:17632"/>
        <dbReference type="ChEBI" id="CHEBI:57540"/>
        <dbReference type="ChEBI" id="CHEBI:57945"/>
        <dbReference type="EC" id="1.14.12.17"/>
    </reaction>
</comment>
<comment type="cofactor">
    <cofactor>
        <name>heme b</name>
        <dbReference type="ChEBI" id="CHEBI:60344"/>
    </cofactor>
    <text>Binds 1 heme b group.</text>
</comment>
<comment type="cofactor">
    <cofactor>
        <name>FAD</name>
        <dbReference type="ChEBI" id="CHEBI:57692"/>
    </cofactor>
    <text>Binds 1 FAD.</text>
</comment>
<comment type="biophysicochemical properties">
    <kinetics>
        <KM evidence="5">22 uM for O(2)</KM>
    </kinetics>
</comment>
<comment type="subunit">
    <text evidence="4">Monomer.</text>
</comment>
<comment type="induction">
    <text evidence="5">Expressed at very low levels in untreated trophozoites of the parasite. Expression is markedly stimulated in nitrite-supplemented medium. Induction by nitrite is probably mediated by NO, likely generated upon reduction of nitrite. Also induced in cells grown in the presence of the NO-donors 3,3-bis(aminoethyl)-1-hydroxy-2-oxo-1-triazene (DETA-NONOate), and S-nitrosoglutathione (GSNO).</text>
</comment>
<comment type="domain">
    <text>Consists of two distinct domains; an N-terminal heme-containing oxygen-binding domain and a C-terminal reductase domain with binding sites for FAD and NAD(P)H.</text>
</comment>
<comment type="similarity">
    <text evidence="2">Belongs to the globin family. Two-domain flavohemoproteins subfamily.</text>
</comment>
<comment type="similarity">
    <text evidence="6">In the C-terminal section; belongs to the flavoprotein pyridine nucleotide cytochrome reductase family.</text>
</comment>
<protein>
    <recommendedName>
        <fullName>Flavohemoprotein</fullName>
    </recommendedName>
    <alternativeName>
        <fullName>Flavohemoglobin</fullName>
        <shortName>FlavoHb</shortName>
    </alternativeName>
    <alternativeName>
        <fullName>Hemoglobin-like protein</fullName>
    </alternativeName>
    <alternativeName>
        <fullName>Nitric oxide dioxygenase</fullName>
        <shortName>NO oxygenase</shortName>
        <shortName>NOD</shortName>
        <ecNumber>1.14.12.17</ecNumber>
    </alternativeName>
</protein>
<accession>E2RTZ4</accession>
<accession>A8BWC7</accession>
<accession>Q86QZ2</accession>
<keyword id="KW-0216">Detoxification</keyword>
<keyword id="KW-0274">FAD</keyword>
<keyword id="KW-0285">Flavoprotein</keyword>
<keyword id="KW-0349">Heme</keyword>
<keyword id="KW-0408">Iron</keyword>
<keyword id="KW-0479">Metal-binding</keyword>
<keyword id="KW-0520">NAD</keyword>
<keyword id="KW-0521">NADP</keyword>
<keyword id="KW-0560">Oxidoreductase</keyword>
<keyword id="KW-0561">Oxygen transport</keyword>
<keyword id="KW-0813">Transport</keyword>
<dbReference type="EC" id="1.14.12.17"/>
<dbReference type="EMBL" id="AY132357">
    <property type="protein sequence ID" value="AAM94640.1"/>
    <property type="molecule type" value="Genomic_DNA"/>
</dbReference>
<dbReference type="EMBL" id="AACB02000055">
    <property type="protein sequence ID" value="EDO76804.1"/>
    <property type="molecule type" value="Genomic_DNA"/>
</dbReference>
<dbReference type="RefSeq" id="XP_001704478.1">
    <property type="nucleotide sequence ID" value="XM_001704426.1"/>
</dbReference>
<dbReference type="SMR" id="E2RTZ4"/>
<dbReference type="STRING" id="184922.E2RTZ4"/>
<dbReference type="EnsemblProtists" id="EDO76804">
    <property type="protein sequence ID" value="EDO76804"/>
    <property type="gene ID" value="GL50803_15009"/>
</dbReference>
<dbReference type="GeneID" id="5697339"/>
<dbReference type="KEGG" id="gla:GL50803_0015009"/>
<dbReference type="VEuPathDB" id="GiardiaDB:GL50803_15009"/>
<dbReference type="HOGENOM" id="CLU_003827_12_0_1"/>
<dbReference type="OMA" id="ADIHYEV"/>
<dbReference type="SABIO-RK" id="E2RTZ4"/>
<dbReference type="GO" id="GO:0020037">
    <property type="term" value="F:heme binding"/>
    <property type="evidence" value="ECO:0007669"/>
    <property type="project" value="InterPro"/>
</dbReference>
<dbReference type="GO" id="GO:0046872">
    <property type="term" value="F:metal ion binding"/>
    <property type="evidence" value="ECO:0007669"/>
    <property type="project" value="UniProtKB-KW"/>
</dbReference>
<dbReference type="GO" id="GO:0008941">
    <property type="term" value="F:nitric oxide dioxygenase NAD(P)H activity"/>
    <property type="evidence" value="ECO:0007669"/>
    <property type="project" value="UniProtKB-EC"/>
</dbReference>
<dbReference type="GO" id="GO:0019825">
    <property type="term" value="F:oxygen binding"/>
    <property type="evidence" value="ECO:0007669"/>
    <property type="project" value="InterPro"/>
</dbReference>
<dbReference type="GO" id="GO:0005344">
    <property type="term" value="F:oxygen carrier activity"/>
    <property type="evidence" value="ECO:0007669"/>
    <property type="project" value="UniProtKB-KW"/>
</dbReference>
<dbReference type="GO" id="GO:0062197">
    <property type="term" value="P:cellular response to chemical stress"/>
    <property type="evidence" value="ECO:0007669"/>
    <property type="project" value="UniProtKB-ARBA"/>
</dbReference>
<dbReference type="GO" id="GO:0009636">
    <property type="term" value="P:response to toxic substance"/>
    <property type="evidence" value="ECO:0007669"/>
    <property type="project" value="UniProtKB-KW"/>
</dbReference>
<dbReference type="CDD" id="cd06184">
    <property type="entry name" value="flavohem_like_fad_nad_binding"/>
    <property type="match status" value="1"/>
</dbReference>
<dbReference type="FunFam" id="3.40.50.80:FF:000010">
    <property type="entry name" value="Flavohemoprotein"/>
    <property type="match status" value="1"/>
</dbReference>
<dbReference type="Gene3D" id="1.10.490.10">
    <property type="entry name" value="Globins"/>
    <property type="match status" value="2"/>
</dbReference>
<dbReference type="Gene3D" id="3.40.50.80">
    <property type="entry name" value="Nucleotide-binding domain of ferredoxin-NADP reductase (FNR) module"/>
    <property type="match status" value="1"/>
</dbReference>
<dbReference type="Gene3D" id="2.40.30.10">
    <property type="entry name" value="Translation factors"/>
    <property type="match status" value="1"/>
</dbReference>
<dbReference type="InterPro" id="IPR008333">
    <property type="entry name" value="Cbr1-like_FAD-bd_dom"/>
</dbReference>
<dbReference type="InterPro" id="IPR017927">
    <property type="entry name" value="FAD-bd_FR_type"/>
</dbReference>
<dbReference type="InterPro" id="IPR039261">
    <property type="entry name" value="FNR_nucleotide-bd"/>
</dbReference>
<dbReference type="InterPro" id="IPR000971">
    <property type="entry name" value="Globin"/>
</dbReference>
<dbReference type="InterPro" id="IPR009050">
    <property type="entry name" value="Globin-like_sf"/>
</dbReference>
<dbReference type="InterPro" id="IPR012292">
    <property type="entry name" value="Globin/Proto"/>
</dbReference>
<dbReference type="InterPro" id="IPR001433">
    <property type="entry name" value="OxRdtase_FAD/NAD-bd"/>
</dbReference>
<dbReference type="InterPro" id="IPR017938">
    <property type="entry name" value="Riboflavin_synthase-like_b-brl"/>
</dbReference>
<dbReference type="PANTHER" id="PTHR43396">
    <property type="entry name" value="FLAVOHEMOPROTEIN"/>
    <property type="match status" value="1"/>
</dbReference>
<dbReference type="PANTHER" id="PTHR43396:SF3">
    <property type="entry name" value="FLAVOHEMOPROTEIN"/>
    <property type="match status" value="1"/>
</dbReference>
<dbReference type="Pfam" id="PF00970">
    <property type="entry name" value="FAD_binding_6"/>
    <property type="match status" value="1"/>
</dbReference>
<dbReference type="Pfam" id="PF00042">
    <property type="entry name" value="Globin"/>
    <property type="match status" value="1"/>
</dbReference>
<dbReference type="Pfam" id="PF00175">
    <property type="entry name" value="NAD_binding_1"/>
    <property type="match status" value="1"/>
</dbReference>
<dbReference type="SUPFAM" id="SSF52343">
    <property type="entry name" value="Ferredoxin reductase-like, C-terminal NADP-linked domain"/>
    <property type="match status" value="1"/>
</dbReference>
<dbReference type="SUPFAM" id="SSF46458">
    <property type="entry name" value="Globin-like"/>
    <property type="match status" value="1"/>
</dbReference>
<dbReference type="SUPFAM" id="SSF63380">
    <property type="entry name" value="Riboflavin synthase domain-like"/>
    <property type="match status" value="1"/>
</dbReference>
<dbReference type="PROSITE" id="PS51384">
    <property type="entry name" value="FAD_FR"/>
    <property type="match status" value="1"/>
</dbReference>
<dbReference type="PROSITE" id="PS01033">
    <property type="entry name" value="GLOBIN"/>
    <property type="match status" value="1"/>
</dbReference>
<sequence>MTLSEDTLRAVEATAGLIAAQGIEFTRAFYERMLTKNEELKNIFNLAHQRTLRQPKALLDSLVAYALNIRRINELYELKGKGLPVPPEHWAELQGFFSAAERVANKHTSFGIQPAQYQIVGAHLLATIEDRITKDKDILAEWAKAYQFLADLFIKREEEIYAATEGCKGGWRQTRTFRVEEKTRVNEIICKFRLVPAEEGAGVVEHRPGQYLAIFVRSPEHFQHQQIRQYSIISAPNSAYYEIAVHRDEKGTVSRYLHDYVSTGDLLEVAPPYGDFFLRYLEADEQAPADTQASQEFQMLQSGAINFAAEKTMPIVLISGGIGQTPLLSMLRFLAQKEGKETARPIFWIHAAHNSRVRAFKEEVDAIRETALPSLRVVTFLSEVRATDREGEDYDFAGRINLDRISELTKLEADNANPHYFFVGPTGFMTAVEEQLKTKSVPNSRIHFEMFGPFKASH</sequence>
<organism>
    <name type="scientific">Giardia intestinalis (strain ATCC 50803 / WB clone C6)</name>
    <name type="common">Giardia lamblia</name>
    <dbReference type="NCBI Taxonomy" id="184922"/>
    <lineage>
        <taxon>Eukaryota</taxon>
        <taxon>Metamonada</taxon>
        <taxon>Diplomonadida</taxon>
        <taxon>Hexamitidae</taxon>
        <taxon>Giardiinae</taxon>
        <taxon>Giardia</taxon>
    </lineage>
</organism>
<name>HMP_GIAIC</name>
<reference key="1">
    <citation type="journal article" date="2003" name="Curr. Biol.">
        <title>Phylogenetic analyses of diplomonad genes reveal frequent lateral gene transfers affecting eukaryotes.</title>
        <authorList>
            <person name="Andersson J.O."/>
            <person name="Sjogren A.M."/>
            <person name="Davis L.A."/>
            <person name="Embley T.M."/>
            <person name="Roger A.J."/>
        </authorList>
    </citation>
    <scope>NUCLEOTIDE SEQUENCE [GENOMIC DNA]</scope>
    <source>
        <strain>ATCC 50803 / WB clone C6</strain>
    </source>
</reference>
<reference key="2">
    <citation type="journal article" date="2007" name="Science">
        <title>Genomic minimalism in the early diverging intestinal parasite Giardia lamblia.</title>
        <authorList>
            <person name="Morrison H.G."/>
            <person name="McArthur A.G."/>
            <person name="Gillin F.D."/>
            <person name="Aley S.B."/>
            <person name="Adam R.D."/>
            <person name="Olsen G.J."/>
            <person name="Best A.A."/>
            <person name="Cande W.Z."/>
            <person name="Chen F."/>
            <person name="Cipriano M.J."/>
            <person name="Davids B.J."/>
            <person name="Dawson S.C."/>
            <person name="Elmendorf H.G."/>
            <person name="Hehl A.B."/>
            <person name="Holder M.E."/>
            <person name="Huse S.M."/>
            <person name="Kim U.U."/>
            <person name="Lasek-Nesselquist E."/>
            <person name="Manning G."/>
            <person name="Nigam A."/>
            <person name="Nixon J.E.J."/>
            <person name="Palm D."/>
            <person name="Passamaneck N.E."/>
            <person name="Prabhu A."/>
            <person name="Reich C.I."/>
            <person name="Reiner D.S."/>
            <person name="Samuelson J."/>
            <person name="Svard S.G."/>
            <person name="Sogin M.L."/>
        </authorList>
    </citation>
    <scope>NUCLEOTIDE SEQUENCE [LARGE SCALE GENOMIC DNA]</scope>
    <source>
        <strain>ATCC 50803 / WB clone C6</strain>
    </source>
</reference>
<reference key="3">
    <citation type="journal article" date="2010" name="Biochem. Biophys. Res. Commun.">
        <title>Giardia lamblia encodes a functional flavohemoglobin.</title>
        <authorList>
            <person name="Rafferty S."/>
            <person name="Luu B."/>
            <person name="March R.E."/>
            <person name="Yee J."/>
        </authorList>
    </citation>
    <scope>FUNCTION</scope>
    <scope>HEME-BINDING</scope>
    <scope>SUBUNIT</scope>
    <scope>COFACTOR</scope>
</reference>
<reference key="4">
    <citation type="journal article" date="2010" name="Biochem. Biophys. Res. Commun.">
        <title>Flavohemoglobin and nitric oxide detoxification in the human protozoan parasite Giardia intestinalis.</title>
        <authorList>
            <person name="Mastronicola D."/>
            <person name="Testa F."/>
            <person name="Forte E."/>
            <person name="Bordi E."/>
            <person name="Pucillo L.P."/>
            <person name="Sarti P."/>
            <person name="Giuffre A."/>
        </authorList>
    </citation>
    <scope>FUNCTION</scope>
    <scope>BIOPHYSICOCHEMICAL PROPERTIES</scope>
    <scope>COFACTOR</scope>
    <scope>INDUCTION</scope>
</reference>